<accession>Q6G1H4</accession>
<proteinExistence type="inferred from homology"/>
<protein>
    <recommendedName>
        <fullName evidence="1">3-dehydroquinate synthase</fullName>
        <shortName evidence="1">DHQS</shortName>
        <ecNumber evidence="1">4.2.3.4</ecNumber>
    </recommendedName>
</protein>
<organism>
    <name type="scientific">Bartonella quintana (strain Toulouse)</name>
    <name type="common">Rochalimaea quintana</name>
    <dbReference type="NCBI Taxonomy" id="283165"/>
    <lineage>
        <taxon>Bacteria</taxon>
        <taxon>Pseudomonadati</taxon>
        <taxon>Pseudomonadota</taxon>
        <taxon>Alphaproteobacteria</taxon>
        <taxon>Hyphomicrobiales</taxon>
        <taxon>Bartonellaceae</taxon>
        <taxon>Bartonella</taxon>
    </lineage>
</organism>
<evidence type="ECO:0000255" key="1">
    <source>
        <dbReference type="HAMAP-Rule" id="MF_00110"/>
    </source>
</evidence>
<comment type="function">
    <text evidence="1">Catalyzes the conversion of 3-deoxy-D-arabino-heptulosonate 7-phosphate (DAHP) to dehydroquinate (DHQ).</text>
</comment>
<comment type="catalytic activity">
    <reaction evidence="1">
        <text>7-phospho-2-dehydro-3-deoxy-D-arabino-heptonate = 3-dehydroquinate + phosphate</text>
        <dbReference type="Rhea" id="RHEA:21968"/>
        <dbReference type="ChEBI" id="CHEBI:32364"/>
        <dbReference type="ChEBI" id="CHEBI:43474"/>
        <dbReference type="ChEBI" id="CHEBI:58394"/>
        <dbReference type="EC" id="4.2.3.4"/>
    </reaction>
</comment>
<comment type="cofactor">
    <cofactor evidence="1">
        <name>Co(2+)</name>
        <dbReference type="ChEBI" id="CHEBI:48828"/>
    </cofactor>
    <cofactor evidence="1">
        <name>Zn(2+)</name>
        <dbReference type="ChEBI" id="CHEBI:29105"/>
    </cofactor>
    <text evidence="1">Binds 1 divalent metal cation per subunit. Can use either Co(2+) or Zn(2+).</text>
</comment>
<comment type="cofactor">
    <cofactor evidence="1">
        <name>NAD(+)</name>
        <dbReference type="ChEBI" id="CHEBI:57540"/>
    </cofactor>
</comment>
<comment type="pathway">
    <text evidence="1">Metabolic intermediate biosynthesis; chorismate biosynthesis; chorismate from D-erythrose 4-phosphate and phosphoenolpyruvate: step 2/7.</text>
</comment>
<comment type="subcellular location">
    <subcellularLocation>
        <location evidence="1">Cytoplasm</location>
    </subcellularLocation>
</comment>
<comment type="similarity">
    <text evidence="1">Belongs to the sugar phosphate cyclases superfamily. Dehydroquinate synthase family.</text>
</comment>
<feature type="chain" id="PRO_0000231069" description="3-dehydroquinate synthase">
    <location>
        <begin position="1"/>
        <end position="377"/>
    </location>
</feature>
<feature type="binding site" evidence="1">
    <location>
        <begin position="113"/>
        <end position="117"/>
    </location>
    <ligand>
        <name>NAD(+)</name>
        <dbReference type="ChEBI" id="CHEBI:57540"/>
    </ligand>
</feature>
<feature type="binding site" evidence="1">
    <location>
        <begin position="137"/>
        <end position="138"/>
    </location>
    <ligand>
        <name>NAD(+)</name>
        <dbReference type="ChEBI" id="CHEBI:57540"/>
    </ligand>
</feature>
<feature type="binding site" evidence="1">
    <location>
        <position position="150"/>
    </location>
    <ligand>
        <name>NAD(+)</name>
        <dbReference type="ChEBI" id="CHEBI:57540"/>
    </ligand>
</feature>
<feature type="binding site" evidence="1">
    <location>
        <position position="159"/>
    </location>
    <ligand>
        <name>NAD(+)</name>
        <dbReference type="ChEBI" id="CHEBI:57540"/>
    </ligand>
</feature>
<feature type="binding site" evidence="1">
    <location>
        <begin position="177"/>
        <end position="180"/>
    </location>
    <ligand>
        <name>NAD(+)</name>
        <dbReference type="ChEBI" id="CHEBI:57540"/>
    </ligand>
</feature>
<feature type="binding site" evidence="1">
    <location>
        <position position="192"/>
    </location>
    <ligand>
        <name>Zn(2+)</name>
        <dbReference type="ChEBI" id="CHEBI:29105"/>
    </ligand>
</feature>
<feature type="binding site" evidence="1">
    <location>
        <position position="254"/>
    </location>
    <ligand>
        <name>Zn(2+)</name>
        <dbReference type="ChEBI" id="CHEBI:29105"/>
    </ligand>
</feature>
<feature type="binding site" evidence="1">
    <location>
        <position position="273"/>
    </location>
    <ligand>
        <name>Zn(2+)</name>
        <dbReference type="ChEBI" id="CHEBI:29105"/>
    </ligand>
</feature>
<name>AROB_BARQU</name>
<dbReference type="EC" id="4.2.3.4" evidence="1"/>
<dbReference type="EMBL" id="BX897700">
    <property type="protein sequence ID" value="CAF26786.1"/>
    <property type="molecule type" value="Genomic_DNA"/>
</dbReference>
<dbReference type="RefSeq" id="WP_011179940.1">
    <property type="nucleotide sequence ID" value="NC_005955.1"/>
</dbReference>
<dbReference type="SMR" id="Q6G1H4"/>
<dbReference type="KEGG" id="bqu:BQ13280"/>
<dbReference type="eggNOG" id="COG0337">
    <property type="taxonomic scope" value="Bacteria"/>
</dbReference>
<dbReference type="HOGENOM" id="CLU_001201_0_2_5"/>
<dbReference type="OrthoDB" id="9806583at2"/>
<dbReference type="UniPathway" id="UPA00053">
    <property type="reaction ID" value="UER00085"/>
</dbReference>
<dbReference type="Proteomes" id="UP000000597">
    <property type="component" value="Chromosome"/>
</dbReference>
<dbReference type="GO" id="GO:0005737">
    <property type="term" value="C:cytoplasm"/>
    <property type="evidence" value="ECO:0007669"/>
    <property type="project" value="UniProtKB-SubCell"/>
</dbReference>
<dbReference type="GO" id="GO:0003856">
    <property type="term" value="F:3-dehydroquinate synthase activity"/>
    <property type="evidence" value="ECO:0007669"/>
    <property type="project" value="UniProtKB-UniRule"/>
</dbReference>
<dbReference type="GO" id="GO:0046872">
    <property type="term" value="F:metal ion binding"/>
    <property type="evidence" value="ECO:0007669"/>
    <property type="project" value="UniProtKB-KW"/>
</dbReference>
<dbReference type="GO" id="GO:0000166">
    <property type="term" value="F:nucleotide binding"/>
    <property type="evidence" value="ECO:0007669"/>
    <property type="project" value="UniProtKB-KW"/>
</dbReference>
<dbReference type="GO" id="GO:0008652">
    <property type="term" value="P:amino acid biosynthetic process"/>
    <property type="evidence" value="ECO:0007669"/>
    <property type="project" value="UniProtKB-KW"/>
</dbReference>
<dbReference type="GO" id="GO:0009073">
    <property type="term" value="P:aromatic amino acid family biosynthetic process"/>
    <property type="evidence" value="ECO:0007669"/>
    <property type="project" value="UniProtKB-KW"/>
</dbReference>
<dbReference type="GO" id="GO:0009423">
    <property type="term" value="P:chorismate biosynthetic process"/>
    <property type="evidence" value="ECO:0007669"/>
    <property type="project" value="UniProtKB-UniRule"/>
</dbReference>
<dbReference type="CDD" id="cd08195">
    <property type="entry name" value="DHQS"/>
    <property type="match status" value="1"/>
</dbReference>
<dbReference type="FunFam" id="3.40.50.1970:FF:000007">
    <property type="entry name" value="Pentafunctional AROM polypeptide"/>
    <property type="match status" value="1"/>
</dbReference>
<dbReference type="Gene3D" id="3.40.50.1970">
    <property type="match status" value="1"/>
</dbReference>
<dbReference type="Gene3D" id="1.20.1090.10">
    <property type="entry name" value="Dehydroquinate synthase-like - alpha domain"/>
    <property type="match status" value="1"/>
</dbReference>
<dbReference type="HAMAP" id="MF_00110">
    <property type="entry name" value="DHQ_synthase"/>
    <property type="match status" value="1"/>
</dbReference>
<dbReference type="InterPro" id="IPR050071">
    <property type="entry name" value="Dehydroquinate_synthase"/>
</dbReference>
<dbReference type="InterPro" id="IPR016037">
    <property type="entry name" value="DHQ_synth_AroB"/>
</dbReference>
<dbReference type="InterPro" id="IPR030963">
    <property type="entry name" value="DHQ_synth_fam"/>
</dbReference>
<dbReference type="InterPro" id="IPR030960">
    <property type="entry name" value="DHQS/DOIS_N"/>
</dbReference>
<dbReference type="InterPro" id="IPR056179">
    <property type="entry name" value="DHQS_C"/>
</dbReference>
<dbReference type="NCBIfam" id="TIGR01357">
    <property type="entry name" value="aroB"/>
    <property type="match status" value="1"/>
</dbReference>
<dbReference type="PANTHER" id="PTHR43622">
    <property type="entry name" value="3-DEHYDROQUINATE SYNTHASE"/>
    <property type="match status" value="1"/>
</dbReference>
<dbReference type="PANTHER" id="PTHR43622:SF7">
    <property type="entry name" value="3-DEHYDROQUINATE SYNTHASE, CHLOROPLASTIC"/>
    <property type="match status" value="1"/>
</dbReference>
<dbReference type="Pfam" id="PF01761">
    <property type="entry name" value="DHQ_synthase"/>
    <property type="match status" value="1"/>
</dbReference>
<dbReference type="Pfam" id="PF24621">
    <property type="entry name" value="DHQS_C"/>
    <property type="match status" value="1"/>
</dbReference>
<dbReference type="PIRSF" id="PIRSF001455">
    <property type="entry name" value="DHQ_synth"/>
    <property type="match status" value="1"/>
</dbReference>
<dbReference type="SUPFAM" id="SSF56796">
    <property type="entry name" value="Dehydroquinate synthase-like"/>
    <property type="match status" value="1"/>
</dbReference>
<sequence>MQTKTVTVKLDKHCYDIIIGPGLVAQAVWQIKHSLHKKDLHQTRFALVTDSNVASLHLDTLQAELTKNKIHTVPIIVEAGEQSKSFLTLQIVIDRILAARLERGDCVIAFGGGVIGDLGGFAASIIRRGMNFIQMPTTLLAQIDSSVGGKTGINSRYGKNLIGAFYQPQCVIADTCFLDTLPLREFRAGYAEIVKYGLISQPDFFEWLEKNWQKIFSNGPTRTEAIVRSCQFKADIVARDEHETGERALLNLGHTFGHMLETATAYDSNRLIHGEAVAIGMVLAHQFSAQLNLINPTLIQRVEAHLKAVGLPTQLKDIPGKLPEAETLMTLIAQDKKVSQNNLTFILTRGLGQSFIAKTVSPEAVLAFLEQKLAEIR</sequence>
<keyword id="KW-0028">Amino-acid biosynthesis</keyword>
<keyword id="KW-0057">Aromatic amino acid biosynthesis</keyword>
<keyword id="KW-0170">Cobalt</keyword>
<keyword id="KW-0963">Cytoplasm</keyword>
<keyword id="KW-0456">Lyase</keyword>
<keyword id="KW-0479">Metal-binding</keyword>
<keyword id="KW-0520">NAD</keyword>
<keyword id="KW-0547">Nucleotide-binding</keyword>
<keyword id="KW-0862">Zinc</keyword>
<gene>
    <name evidence="1" type="primary">aroB</name>
    <name type="ordered locus">BQ13280</name>
</gene>
<reference key="1">
    <citation type="journal article" date="2004" name="Proc. Natl. Acad. Sci. U.S.A.">
        <title>The louse-borne human pathogen Bartonella quintana is a genomic derivative of the zoonotic agent Bartonella henselae.</title>
        <authorList>
            <person name="Alsmark U.C.M."/>
            <person name="Frank A.C."/>
            <person name="Karlberg E.O."/>
            <person name="Legault B.-A."/>
            <person name="Ardell D.H."/>
            <person name="Canbaeck B."/>
            <person name="Eriksson A.-S."/>
            <person name="Naeslund A.K."/>
            <person name="Handley S.A."/>
            <person name="Huvet M."/>
            <person name="La Scola B."/>
            <person name="Holmberg M."/>
            <person name="Andersson S.G.E."/>
        </authorList>
    </citation>
    <scope>NUCLEOTIDE SEQUENCE [LARGE SCALE GENOMIC DNA]</scope>
    <source>
        <strain>Toulouse</strain>
    </source>
</reference>